<organism>
    <name type="scientific">Pseudomonas fluorescens (strain SBW25)</name>
    <dbReference type="NCBI Taxonomy" id="216595"/>
    <lineage>
        <taxon>Bacteria</taxon>
        <taxon>Pseudomonadati</taxon>
        <taxon>Pseudomonadota</taxon>
        <taxon>Gammaproteobacteria</taxon>
        <taxon>Pseudomonadales</taxon>
        <taxon>Pseudomonadaceae</taxon>
        <taxon>Pseudomonas</taxon>
    </lineage>
</organism>
<gene>
    <name evidence="1" type="primary">metG</name>
    <name type="ordered locus">PFLU_1161</name>
</gene>
<accession>C3KBZ7</accession>
<reference key="1">
    <citation type="journal article" date="2009" name="Genome Biol.">
        <title>Genomic and genetic analyses of diversity and plant interactions of Pseudomonas fluorescens.</title>
        <authorList>
            <person name="Silby M.W."/>
            <person name="Cerdeno-Tarraga A.M."/>
            <person name="Vernikos G.S."/>
            <person name="Giddens S.R."/>
            <person name="Jackson R.W."/>
            <person name="Preston G.M."/>
            <person name="Zhang X.-X."/>
            <person name="Moon C.D."/>
            <person name="Gehrig S.M."/>
            <person name="Godfrey S.A.C."/>
            <person name="Knight C.G."/>
            <person name="Malone J.G."/>
            <person name="Robinson Z."/>
            <person name="Spiers A.J."/>
            <person name="Harris S."/>
            <person name="Challis G.L."/>
            <person name="Yaxley A.M."/>
            <person name="Harris D."/>
            <person name="Seeger K."/>
            <person name="Murphy L."/>
            <person name="Rutter S."/>
            <person name="Squares R."/>
            <person name="Quail M.A."/>
            <person name="Saunders E."/>
            <person name="Mavromatis K."/>
            <person name="Brettin T.S."/>
            <person name="Bentley S.D."/>
            <person name="Hothersall J."/>
            <person name="Stephens E."/>
            <person name="Thomas C.M."/>
            <person name="Parkhill J."/>
            <person name="Levy S.B."/>
            <person name="Rainey P.B."/>
            <person name="Thomson N.R."/>
        </authorList>
    </citation>
    <scope>NUCLEOTIDE SEQUENCE [LARGE SCALE GENOMIC DNA]</scope>
    <source>
        <strain>SBW25</strain>
    </source>
</reference>
<name>SYM_PSEFS</name>
<sequence length="683" mass="75573">MSEPRKILVTSALPYANGSIHLGHMLEYIQTDMWVRFQKHRGNQCIYVCADDAHGSAIMLRAEKEGITPEQLIANVQAEHSADFAEFLVDFDNFHSTHSDENRELSSQIYLRLKEAGHIATRSITQYFDPEKKMFLADRFIKGTCPKCGTEDQYGDNCEKCGATYAPTDLKNPKSAISGATPVLKDSQHFFFKLPDFQQMLQTWTRSGTLQDAVANKIAEWLDAGLQQWDISRDAPYFGFEIPGEPGKYFYVWLDAPIGYMASFKNLCDRTPELDFDAFWAKDSTAELYHFIGKDIVNFHALFWPAMLEGSGYRKPTGIAVHGYLTVNGQKMSKSRGTFIKARTYLDHLSPEYLRYYYASKLGRGVDDLDLNLEDFVQKVNSDLVGKVVNIASRCAGFIHKGNAGVLVAENAAPELTDAFLAAAPSIADAYEARDFARAMREIMGLADRANAWIADKAPWSLNKQEGKQAEVQAICATGVNLFRQLVIFLKPVLPLLAADAEAFLNVAPLTWNDHATLLSNHQLNEFKPLMTRIDPVKVQAMTDASKEDLVASQTDTGESAPAGNGELAKDPISAEIEFDAFAAVDLRVALIVKAEAVEGADKLLRLTLDLGGEQRNVFSGIKSAYPDPSKLDGRLTMMIANLKPRKMKFGISEGMVMAAGPGGEEIYLLSPDSGAKPGQRIK</sequence>
<evidence type="ECO:0000255" key="1">
    <source>
        <dbReference type="HAMAP-Rule" id="MF_00098"/>
    </source>
</evidence>
<dbReference type="EC" id="6.1.1.10" evidence="1"/>
<dbReference type="EMBL" id="AM181176">
    <property type="protein sequence ID" value="CAY47423.1"/>
    <property type="molecule type" value="Genomic_DNA"/>
</dbReference>
<dbReference type="RefSeq" id="WP_012722495.1">
    <property type="nucleotide sequence ID" value="NC_012660.1"/>
</dbReference>
<dbReference type="SMR" id="C3KBZ7"/>
<dbReference type="STRING" id="294.SRM1_04442"/>
<dbReference type="GeneID" id="93462781"/>
<dbReference type="eggNOG" id="COG0073">
    <property type="taxonomic scope" value="Bacteria"/>
</dbReference>
<dbReference type="eggNOG" id="COG0143">
    <property type="taxonomic scope" value="Bacteria"/>
</dbReference>
<dbReference type="HOGENOM" id="CLU_009710_7_0_6"/>
<dbReference type="OrthoDB" id="9810191at2"/>
<dbReference type="GO" id="GO:0005829">
    <property type="term" value="C:cytosol"/>
    <property type="evidence" value="ECO:0007669"/>
    <property type="project" value="TreeGrafter"/>
</dbReference>
<dbReference type="GO" id="GO:0005524">
    <property type="term" value="F:ATP binding"/>
    <property type="evidence" value="ECO:0007669"/>
    <property type="project" value="UniProtKB-UniRule"/>
</dbReference>
<dbReference type="GO" id="GO:0046872">
    <property type="term" value="F:metal ion binding"/>
    <property type="evidence" value="ECO:0007669"/>
    <property type="project" value="UniProtKB-KW"/>
</dbReference>
<dbReference type="GO" id="GO:0004825">
    <property type="term" value="F:methionine-tRNA ligase activity"/>
    <property type="evidence" value="ECO:0007669"/>
    <property type="project" value="UniProtKB-UniRule"/>
</dbReference>
<dbReference type="GO" id="GO:0000049">
    <property type="term" value="F:tRNA binding"/>
    <property type="evidence" value="ECO:0007669"/>
    <property type="project" value="UniProtKB-KW"/>
</dbReference>
<dbReference type="GO" id="GO:0006431">
    <property type="term" value="P:methionyl-tRNA aminoacylation"/>
    <property type="evidence" value="ECO:0007669"/>
    <property type="project" value="UniProtKB-UniRule"/>
</dbReference>
<dbReference type="CDD" id="cd07957">
    <property type="entry name" value="Anticodon_Ia_Met"/>
    <property type="match status" value="1"/>
</dbReference>
<dbReference type="CDD" id="cd00814">
    <property type="entry name" value="MetRS_core"/>
    <property type="match status" value="1"/>
</dbReference>
<dbReference type="CDD" id="cd02800">
    <property type="entry name" value="tRNA_bind_EcMetRS_like"/>
    <property type="match status" value="1"/>
</dbReference>
<dbReference type="FunFam" id="1.10.730.10:FF:000005">
    <property type="entry name" value="Methionine--tRNA ligase"/>
    <property type="match status" value="1"/>
</dbReference>
<dbReference type="FunFam" id="2.20.28.20:FF:000001">
    <property type="entry name" value="Methionine--tRNA ligase"/>
    <property type="match status" value="1"/>
</dbReference>
<dbReference type="FunFam" id="2.40.50.140:FF:000042">
    <property type="entry name" value="Methionine--tRNA ligase"/>
    <property type="match status" value="1"/>
</dbReference>
<dbReference type="Gene3D" id="3.40.50.620">
    <property type="entry name" value="HUPs"/>
    <property type="match status" value="1"/>
</dbReference>
<dbReference type="Gene3D" id="1.10.730.10">
    <property type="entry name" value="Isoleucyl-tRNA Synthetase, Domain 1"/>
    <property type="match status" value="1"/>
</dbReference>
<dbReference type="Gene3D" id="2.20.28.20">
    <property type="entry name" value="Methionyl-tRNA synthetase, Zn-domain"/>
    <property type="match status" value="1"/>
</dbReference>
<dbReference type="Gene3D" id="2.40.50.140">
    <property type="entry name" value="Nucleic acid-binding proteins"/>
    <property type="match status" value="1"/>
</dbReference>
<dbReference type="HAMAP" id="MF_00098">
    <property type="entry name" value="Met_tRNA_synth_type1"/>
    <property type="match status" value="1"/>
</dbReference>
<dbReference type="InterPro" id="IPR001412">
    <property type="entry name" value="aa-tRNA-synth_I_CS"/>
</dbReference>
<dbReference type="InterPro" id="IPR041872">
    <property type="entry name" value="Anticodon_Met"/>
</dbReference>
<dbReference type="InterPro" id="IPR004495">
    <property type="entry name" value="Met-tRNA-synth_bsu_C"/>
</dbReference>
<dbReference type="InterPro" id="IPR023458">
    <property type="entry name" value="Met-tRNA_ligase_1"/>
</dbReference>
<dbReference type="InterPro" id="IPR014758">
    <property type="entry name" value="Met-tRNA_synth"/>
</dbReference>
<dbReference type="InterPro" id="IPR015413">
    <property type="entry name" value="Methionyl/Leucyl_tRNA_Synth"/>
</dbReference>
<dbReference type="InterPro" id="IPR033911">
    <property type="entry name" value="MetRS_core"/>
</dbReference>
<dbReference type="InterPro" id="IPR029038">
    <property type="entry name" value="MetRS_Zn"/>
</dbReference>
<dbReference type="InterPro" id="IPR012340">
    <property type="entry name" value="NA-bd_OB-fold"/>
</dbReference>
<dbReference type="InterPro" id="IPR014729">
    <property type="entry name" value="Rossmann-like_a/b/a_fold"/>
</dbReference>
<dbReference type="InterPro" id="IPR002547">
    <property type="entry name" value="tRNA-bd_dom"/>
</dbReference>
<dbReference type="InterPro" id="IPR009080">
    <property type="entry name" value="tRNAsynth_Ia_anticodon-bd"/>
</dbReference>
<dbReference type="NCBIfam" id="TIGR00398">
    <property type="entry name" value="metG"/>
    <property type="match status" value="1"/>
</dbReference>
<dbReference type="NCBIfam" id="TIGR00399">
    <property type="entry name" value="metG_C_term"/>
    <property type="match status" value="1"/>
</dbReference>
<dbReference type="NCBIfam" id="NF001100">
    <property type="entry name" value="PRK00133.1"/>
    <property type="match status" value="1"/>
</dbReference>
<dbReference type="PANTHER" id="PTHR45765">
    <property type="entry name" value="METHIONINE--TRNA LIGASE"/>
    <property type="match status" value="1"/>
</dbReference>
<dbReference type="PANTHER" id="PTHR45765:SF1">
    <property type="entry name" value="METHIONINE--TRNA LIGASE, CYTOPLASMIC"/>
    <property type="match status" value="1"/>
</dbReference>
<dbReference type="Pfam" id="PF19303">
    <property type="entry name" value="Anticodon_3"/>
    <property type="match status" value="1"/>
</dbReference>
<dbReference type="Pfam" id="PF09334">
    <property type="entry name" value="tRNA-synt_1g"/>
    <property type="match status" value="1"/>
</dbReference>
<dbReference type="Pfam" id="PF01588">
    <property type="entry name" value="tRNA_bind"/>
    <property type="match status" value="1"/>
</dbReference>
<dbReference type="PRINTS" id="PR01041">
    <property type="entry name" value="TRNASYNTHMET"/>
</dbReference>
<dbReference type="SUPFAM" id="SSF47323">
    <property type="entry name" value="Anticodon-binding domain of a subclass of class I aminoacyl-tRNA synthetases"/>
    <property type="match status" value="1"/>
</dbReference>
<dbReference type="SUPFAM" id="SSF57770">
    <property type="entry name" value="Methionyl-tRNA synthetase (MetRS), Zn-domain"/>
    <property type="match status" value="1"/>
</dbReference>
<dbReference type="SUPFAM" id="SSF50249">
    <property type="entry name" value="Nucleic acid-binding proteins"/>
    <property type="match status" value="1"/>
</dbReference>
<dbReference type="SUPFAM" id="SSF52374">
    <property type="entry name" value="Nucleotidylyl transferase"/>
    <property type="match status" value="1"/>
</dbReference>
<dbReference type="PROSITE" id="PS00178">
    <property type="entry name" value="AA_TRNA_LIGASE_I"/>
    <property type="match status" value="1"/>
</dbReference>
<dbReference type="PROSITE" id="PS50886">
    <property type="entry name" value="TRBD"/>
    <property type="match status" value="1"/>
</dbReference>
<protein>
    <recommendedName>
        <fullName evidence="1">Methionine--tRNA ligase</fullName>
        <ecNumber evidence="1">6.1.1.10</ecNumber>
    </recommendedName>
    <alternativeName>
        <fullName evidence="1">Methionyl-tRNA synthetase</fullName>
        <shortName evidence="1">MetRS</shortName>
    </alternativeName>
</protein>
<proteinExistence type="inferred from homology"/>
<keyword id="KW-0030">Aminoacyl-tRNA synthetase</keyword>
<keyword id="KW-0067">ATP-binding</keyword>
<keyword id="KW-0963">Cytoplasm</keyword>
<keyword id="KW-0436">Ligase</keyword>
<keyword id="KW-0479">Metal-binding</keyword>
<keyword id="KW-0547">Nucleotide-binding</keyword>
<keyword id="KW-0648">Protein biosynthesis</keyword>
<keyword id="KW-0694">RNA-binding</keyword>
<keyword id="KW-0820">tRNA-binding</keyword>
<keyword id="KW-0862">Zinc</keyword>
<feature type="chain" id="PRO_1000202759" description="Methionine--tRNA ligase">
    <location>
        <begin position="1"/>
        <end position="683"/>
    </location>
</feature>
<feature type="domain" description="tRNA-binding" evidence="1">
    <location>
        <begin position="581"/>
        <end position="683"/>
    </location>
</feature>
<feature type="short sequence motif" description="'HIGH' region">
    <location>
        <begin position="14"/>
        <end position="24"/>
    </location>
</feature>
<feature type="short sequence motif" description="'KMSKS' region">
    <location>
        <begin position="331"/>
        <end position="335"/>
    </location>
</feature>
<feature type="binding site" evidence="1">
    <location>
        <position position="145"/>
    </location>
    <ligand>
        <name>Zn(2+)</name>
        <dbReference type="ChEBI" id="CHEBI:29105"/>
    </ligand>
</feature>
<feature type="binding site" evidence="1">
    <location>
        <position position="148"/>
    </location>
    <ligand>
        <name>Zn(2+)</name>
        <dbReference type="ChEBI" id="CHEBI:29105"/>
    </ligand>
</feature>
<feature type="binding site" evidence="1">
    <location>
        <position position="158"/>
    </location>
    <ligand>
        <name>Zn(2+)</name>
        <dbReference type="ChEBI" id="CHEBI:29105"/>
    </ligand>
</feature>
<feature type="binding site" evidence="1">
    <location>
        <position position="161"/>
    </location>
    <ligand>
        <name>Zn(2+)</name>
        <dbReference type="ChEBI" id="CHEBI:29105"/>
    </ligand>
</feature>
<feature type="binding site" evidence="1">
    <location>
        <position position="334"/>
    </location>
    <ligand>
        <name>ATP</name>
        <dbReference type="ChEBI" id="CHEBI:30616"/>
    </ligand>
</feature>
<comment type="function">
    <text evidence="1">Is required not only for elongation of protein synthesis but also for the initiation of all mRNA translation through initiator tRNA(fMet) aminoacylation.</text>
</comment>
<comment type="catalytic activity">
    <reaction evidence="1">
        <text>tRNA(Met) + L-methionine + ATP = L-methionyl-tRNA(Met) + AMP + diphosphate</text>
        <dbReference type="Rhea" id="RHEA:13481"/>
        <dbReference type="Rhea" id="RHEA-COMP:9667"/>
        <dbReference type="Rhea" id="RHEA-COMP:9698"/>
        <dbReference type="ChEBI" id="CHEBI:30616"/>
        <dbReference type="ChEBI" id="CHEBI:33019"/>
        <dbReference type="ChEBI" id="CHEBI:57844"/>
        <dbReference type="ChEBI" id="CHEBI:78442"/>
        <dbReference type="ChEBI" id="CHEBI:78530"/>
        <dbReference type="ChEBI" id="CHEBI:456215"/>
        <dbReference type="EC" id="6.1.1.10"/>
    </reaction>
</comment>
<comment type="cofactor">
    <cofactor evidence="1">
        <name>Zn(2+)</name>
        <dbReference type="ChEBI" id="CHEBI:29105"/>
    </cofactor>
    <text evidence="1">Binds 1 zinc ion per subunit.</text>
</comment>
<comment type="subunit">
    <text evidence="1">Homodimer.</text>
</comment>
<comment type="subcellular location">
    <subcellularLocation>
        <location evidence="1">Cytoplasm</location>
    </subcellularLocation>
</comment>
<comment type="similarity">
    <text evidence="1">Belongs to the class-I aminoacyl-tRNA synthetase family. MetG type 1 subfamily.</text>
</comment>